<feature type="chain" id="PRO_1000085093" description="Apolipoprotein N-acyltransferase">
    <location>
        <begin position="1"/>
        <end position="536"/>
    </location>
</feature>
<feature type="transmembrane region" description="Helical" evidence="1">
    <location>
        <begin position="34"/>
        <end position="54"/>
    </location>
</feature>
<feature type="transmembrane region" description="Helical" evidence="1">
    <location>
        <begin position="64"/>
        <end position="84"/>
    </location>
</feature>
<feature type="transmembrane region" description="Helical" evidence="1">
    <location>
        <begin position="89"/>
        <end position="109"/>
    </location>
</feature>
<feature type="transmembrane region" description="Helical" evidence="1">
    <location>
        <begin position="129"/>
        <end position="149"/>
    </location>
</feature>
<feature type="transmembrane region" description="Helical" evidence="1">
    <location>
        <begin position="172"/>
        <end position="192"/>
    </location>
</feature>
<feature type="transmembrane region" description="Helical" evidence="1">
    <location>
        <begin position="199"/>
        <end position="219"/>
    </location>
</feature>
<feature type="transmembrane region" description="Helical" evidence="1">
    <location>
        <begin position="503"/>
        <end position="523"/>
    </location>
</feature>
<feature type="domain" description="CN hydrolase" evidence="1">
    <location>
        <begin position="244"/>
        <end position="487"/>
    </location>
</feature>
<feature type="active site" description="Proton acceptor" evidence="1">
    <location>
        <position position="283"/>
    </location>
</feature>
<feature type="active site" evidence="1">
    <location>
        <position position="345"/>
    </location>
</feature>
<feature type="active site" description="Nucleophile" evidence="1">
    <location>
        <position position="395"/>
    </location>
</feature>
<sequence length="536" mass="58597">MARACPSLAWQLPWALVAGLAQAASLAWPWGGEPLWWLQLASMAMLAWLLRPGADRAVAWHRAALIGGVFATAWLASTFWWLFISMHRYGALPAPLAAAAVLVLAAFLASYYAAAMGLFCRLAPLHRAGAALLFGACWLLAELARGSLWTGFPWGAGGYAHADGPLRVLARYVGVYGIGAVAALLALLCVQWRRADLRHWPMWLLLLAGAAALALAAVQRTCAIDLCDTPPPWRRDPTLSVELLQGNIAQDEKFRPGSGVALALQWYGQALRTARAQLVVAPETALPLLPQQLMPGYLEGLARHYAQGPQAALLGIPWGDQATGYTNSVLGLSPATGAMPYRYDKHHLVPFGEFVPPFFKWFTARMQIPLGNFNRAGVGQASFAWAGQRLAPNICYEDLFGEELGARFIDPAQAPTVFVNLSNIGWFGNTIAIDQHLQISRMRALEFERPMVRATNTGATAIIDHRGQVTHQLARHTRGVLRGQVHGRGLDAHSGWAITPYAWWVARWGLWPLWALAALALAWAMRAQRMRRARGA</sequence>
<comment type="function">
    <text evidence="1">Catalyzes the phospholipid dependent N-acylation of the N-terminal cysteine of apolipoprotein, the last step in lipoprotein maturation.</text>
</comment>
<comment type="catalytic activity">
    <reaction evidence="1">
        <text>N-terminal S-1,2-diacyl-sn-glyceryl-L-cysteinyl-[lipoprotein] + a glycerophospholipid = N-acyl-S-1,2-diacyl-sn-glyceryl-L-cysteinyl-[lipoprotein] + a 2-acyl-sn-glycero-3-phospholipid + H(+)</text>
        <dbReference type="Rhea" id="RHEA:48228"/>
        <dbReference type="Rhea" id="RHEA-COMP:14681"/>
        <dbReference type="Rhea" id="RHEA-COMP:14684"/>
        <dbReference type="ChEBI" id="CHEBI:15378"/>
        <dbReference type="ChEBI" id="CHEBI:136912"/>
        <dbReference type="ChEBI" id="CHEBI:140656"/>
        <dbReference type="ChEBI" id="CHEBI:140657"/>
        <dbReference type="ChEBI" id="CHEBI:140660"/>
        <dbReference type="EC" id="2.3.1.269"/>
    </reaction>
</comment>
<comment type="pathway">
    <text evidence="1">Protein modification; lipoprotein biosynthesis (N-acyl transfer).</text>
</comment>
<comment type="subcellular location">
    <subcellularLocation>
        <location evidence="1">Cell inner membrane</location>
        <topology evidence="1">Multi-pass membrane protein</topology>
    </subcellularLocation>
</comment>
<comment type="similarity">
    <text evidence="1">Belongs to the CN hydrolase family. Apolipoprotein N-acyltransferase subfamily.</text>
</comment>
<gene>
    <name evidence="1" type="primary">lnt</name>
    <name type="ordered locus">Veis_2158</name>
</gene>
<protein>
    <recommendedName>
        <fullName evidence="1">Apolipoprotein N-acyltransferase</fullName>
        <shortName evidence="1">ALP N-acyltransferase</shortName>
        <ecNumber evidence="1">2.3.1.269</ecNumber>
    </recommendedName>
</protein>
<reference key="1">
    <citation type="submission" date="2006-12" db="EMBL/GenBank/DDBJ databases">
        <title>Complete sequence of chromosome 1 of Verminephrobacter eiseniae EF01-2.</title>
        <authorList>
            <person name="Copeland A."/>
            <person name="Lucas S."/>
            <person name="Lapidus A."/>
            <person name="Barry K."/>
            <person name="Detter J.C."/>
            <person name="Glavina del Rio T."/>
            <person name="Dalin E."/>
            <person name="Tice H."/>
            <person name="Pitluck S."/>
            <person name="Chertkov O."/>
            <person name="Brettin T."/>
            <person name="Bruce D."/>
            <person name="Han C."/>
            <person name="Tapia R."/>
            <person name="Gilna P."/>
            <person name="Schmutz J."/>
            <person name="Larimer F."/>
            <person name="Land M."/>
            <person name="Hauser L."/>
            <person name="Kyrpides N."/>
            <person name="Kim E."/>
            <person name="Stahl D."/>
            <person name="Richardson P."/>
        </authorList>
    </citation>
    <scope>NUCLEOTIDE SEQUENCE [LARGE SCALE GENOMIC DNA]</scope>
    <source>
        <strain>EF01-2</strain>
    </source>
</reference>
<evidence type="ECO:0000255" key="1">
    <source>
        <dbReference type="HAMAP-Rule" id="MF_01148"/>
    </source>
</evidence>
<keyword id="KW-0012">Acyltransferase</keyword>
<keyword id="KW-0997">Cell inner membrane</keyword>
<keyword id="KW-1003">Cell membrane</keyword>
<keyword id="KW-0472">Membrane</keyword>
<keyword id="KW-1185">Reference proteome</keyword>
<keyword id="KW-0808">Transferase</keyword>
<keyword id="KW-0812">Transmembrane</keyword>
<keyword id="KW-1133">Transmembrane helix</keyword>
<organism>
    <name type="scientific">Verminephrobacter eiseniae (strain EF01-2)</name>
    <dbReference type="NCBI Taxonomy" id="391735"/>
    <lineage>
        <taxon>Bacteria</taxon>
        <taxon>Pseudomonadati</taxon>
        <taxon>Pseudomonadota</taxon>
        <taxon>Betaproteobacteria</taxon>
        <taxon>Burkholderiales</taxon>
        <taxon>Comamonadaceae</taxon>
        <taxon>Verminephrobacter</taxon>
    </lineage>
</organism>
<name>LNT_VEREI</name>
<dbReference type="EC" id="2.3.1.269" evidence="1"/>
<dbReference type="EMBL" id="CP000542">
    <property type="protein sequence ID" value="ABM57906.1"/>
    <property type="molecule type" value="Genomic_DNA"/>
</dbReference>
<dbReference type="RefSeq" id="WP_011809912.1">
    <property type="nucleotide sequence ID" value="NC_008786.1"/>
</dbReference>
<dbReference type="SMR" id="A1WJU9"/>
<dbReference type="STRING" id="391735.Veis_2158"/>
<dbReference type="GeneID" id="76460727"/>
<dbReference type="KEGG" id="vei:Veis_2158"/>
<dbReference type="eggNOG" id="COG0815">
    <property type="taxonomic scope" value="Bacteria"/>
</dbReference>
<dbReference type="HOGENOM" id="CLU_019563_3_0_4"/>
<dbReference type="OrthoDB" id="9804277at2"/>
<dbReference type="UniPathway" id="UPA00666"/>
<dbReference type="Proteomes" id="UP000000374">
    <property type="component" value="Chromosome"/>
</dbReference>
<dbReference type="GO" id="GO:0005886">
    <property type="term" value="C:plasma membrane"/>
    <property type="evidence" value="ECO:0007669"/>
    <property type="project" value="UniProtKB-SubCell"/>
</dbReference>
<dbReference type="GO" id="GO:0016410">
    <property type="term" value="F:N-acyltransferase activity"/>
    <property type="evidence" value="ECO:0007669"/>
    <property type="project" value="UniProtKB-UniRule"/>
</dbReference>
<dbReference type="GO" id="GO:0042158">
    <property type="term" value="P:lipoprotein biosynthetic process"/>
    <property type="evidence" value="ECO:0007669"/>
    <property type="project" value="UniProtKB-UniRule"/>
</dbReference>
<dbReference type="CDD" id="cd07571">
    <property type="entry name" value="ALP_N-acyl_transferase"/>
    <property type="match status" value="1"/>
</dbReference>
<dbReference type="Gene3D" id="3.60.110.10">
    <property type="entry name" value="Carbon-nitrogen hydrolase"/>
    <property type="match status" value="1"/>
</dbReference>
<dbReference type="HAMAP" id="MF_01148">
    <property type="entry name" value="Lnt"/>
    <property type="match status" value="1"/>
</dbReference>
<dbReference type="InterPro" id="IPR004563">
    <property type="entry name" value="Apolipo_AcylTrfase"/>
</dbReference>
<dbReference type="InterPro" id="IPR003010">
    <property type="entry name" value="C-N_Hydrolase"/>
</dbReference>
<dbReference type="InterPro" id="IPR036526">
    <property type="entry name" value="C-N_Hydrolase_sf"/>
</dbReference>
<dbReference type="InterPro" id="IPR045378">
    <property type="entry name" value="LNT_N"/>
</dbReference>
<dbReference type="NCBIfam" id="TIGR00546">
    <property type="entry name" value="lnt"/>
    <property type="match status" value="1"/>
</dbReference>
<dbReference type="PANTHER" id="PTHR38686">
    <property type="entry name" value="APOLIPOPROTEIN N-ACYLTRANSFERASE"/>
    <property type="match status" value="1"/>
</dbReference>
<dbReference type="PANTHER" id="PTHR38686:SF1">
    <property type="entry name" value="APOLIPOPROTEIN N-ACYLTRANSFERASE"/>
    <property type="match status" value="1"/>
</dbReference>
<dbReference type="Pfam" id="PF00795">
    <property type="entry name" value="CN_hydrolase"/>
    <property type="match status" value="1"/>
</dbReference>
<dbReference type="Pfam" id="PF20154">
    <property type="entry name" value="LNT_N"/>
    <property type="match status" value="1"/>
</dbReference>
<dbReference type="SUPFAM" id="SSF56317">
    <property type="entry name" value="Carbon-nitrogen hydrolase"/>
    <property type="match status" value="1"/>
</dbReference>
<dbReference type="PROSITE" id="PS50263">
    <property type="entry name" value="CN_HYDROLASE"/>
    <property type="match status" value="1"/>
</dbReference>
<proteinExistence type="inferred from homology"/>
<accession>A1WJU9</accession>